<organism>
    <name type="scientific">Yersinia enterocolitica serotype O:8 / biotype 1B (strain NCTC 13174 / 8081)</name>
    <dbReference type="NCBI Taxonomy" id="393305"/>
    <lineage>
        <taxon>Bacteria</taxon>
        <taxon>Pseudomonadati</taxon>
        <taxon>Pseudomonadota</taxon>
        <taxon>Gammaproteobacteria</taxon>
        <taxon>Enterobacterales</taxon>
        <taxon>Yersiniaceae</taxon>
        <taxon>Yersinia</taxon>
    </lineage>
</organism>
<feature type="chain" id="PRO_0000296943" description="Putative manganese efflux pump MntP">
    <location>
        <begin position="1"/>
        <end position="189"/>
    </location>
</feature>
<feature type="transmembrane region" description="Helical" evidence="1">
    <location>
        <begin position="3"/>
        <end position="23"/>
    </location>
</feature>
<feature type="transmembrane region" description="Helical" evidence="1">
    <location>
        <begin position="41"/>
        <end position="61"/>
    </location>
</feature>
<feature type="transmembrane region" description="Helical" evidence="1">
    <location>
        <begin position="65"/>
        <end position="85"/>
    </location>
</feature>
<feature type="transmembrane region" description="Helical" evidence="1">
    <location>
        <begin position="104"/>
        <end position="124"/>
    </location>
</feature>
<feature type="transmembrane region" description="Helical" evidence="1">
    <location>
        <begin position="132"/>
        <end position="152"/>
    </location>
</feature>
<feature type="transmembrane region" description="Helical" evidence="1">
    <location>
        <begin position="165"/>
        <end position="185"/>
    </location>
</feature>
<accession>A1JM85</accession>
<comment type="function">
    <text evidence="1">Probably functions as a manganese efflux pump.</text>
</comment>
<comment type="subcellular location">
    <subcellularLocation>
        <location evidence="1">Cell inner membrane</location>
        <topology evidence="1">Multi-pass membrane protein</topology>
    </subcellularLocation>
</comment>
<comment type="similarity">
    <text evidence="1">Belongs to the MntP (TC 9.B.29) family.</text>
</comment>
<protein>
    <recommendedName>
        <fullName evidence="1">Putative manganese efflux pump MntP</fullName>
    </recommendedName>
</protein>
<dbReference type="EMBL" id="AM286415">
    <property type="protein sequence ID" value="CAL11841.1"/>
    <property type="molecule type" value="Genomic_DNA"/>
</dbReference>
<dbReference type="RefSeq" id="WP_005170500.1">
    <property type="nucleotide sequence ID" value="NC_008800.1"/>
</dbReference>
<dbReference type="RefSeq" id="YP_001006049.1">
    <property type="nucleotide sequence ID" value="NC_008800.1"/>
</dbReference>
<dbReference type="GeneID" id="93972020"/>
<dbReference type="KEGG" id="yen:YE1772"/>
<dbReference type="PATRIC" id="fig|393305.7.peg.1923"/>
<dbReference type="eggNOG" id="COG1971">
    <property type="taxonomic scope" value="Bacteria"/>
</dbReference>
<dbReference type="HOGENOM" id="CLU_096410_0_0_6"/>
<dbReference type="OrthoDB" id="9811590at2"/>
<dbReference type="Proteomes" id="UP000000642">
    <property type="component" value="Chromosome"/>
</dbReference>
<dbReference type="GO" id="GO:0005886">
    <property type="term" value="C:plasma membrane"/>
    <property type="evidence" value="ECO:0007669"/>
    <property type="project" value="UniProtKB-SubCell"/>
</dbReference>
<dbReference type="GO" id="GO:0005384">
    <property type="term" value="F:manganese ion transmembrane transporter activity"/>
    <property type="evidence" value="ECO:0007669"/>
    <property type="project" value="UniProtKB-UniRule"/>
</dbReference>
<dbReference type="HAMAP" id="MF_01521">
    <property type="entry name" value="MntP_pump"/>
    <property type="match status" value="1"/>
</dbReference>
<dbReference type="InterPro" id="IPR003810">
    <property type="entry name" value="Mntp/YtaF"/>
</dbReference>
<dbReference type="InterPro" id="IPR022929">
    <property type="entry name" value="Put_MntP"/>
</dbReference>
<dbReference type="NCBIfam" id="NF008546">
    <property type="entry name" value="PRK11469.1"/>
    <property type="match status" value="1"/>
</dbReference>
<dbReference type="PANTHER" id="PTHR35529">
    <property type="entry name" value="MANGANESE EFFLUX PUMP MNTP-RELATED"/>
    <property type="match status" value="1"/>
</dbReference>
<dbReference type="PANTHER" id="PTHR35529:SF1">
    <property type="entry name" value="MANGANESE EFFLUX PUMP MNTP-RELATED"/>
    <property type="match status" value="1"/>
</dbReference>
<dbReference type="Pfam" id="PF02659">
    <property type="entry name" value="Mntp"/>
    <property type="match status" value="1"/>
</dbReference>
<proteinExistence type="inferred from homology"/>
<reference key="1">
    <citation type="journal article" date="2006" name="PLoS Genet.">
        <title>The complete genome sequence and comparative genome analysis of the high pathogenicity Yersinia enterocolitica strain 8081.</title>
        <authorList>
            <person name="Thomson N.R."/>
            <person name="Howard S."/>
            <person name="Wren B.W."/>
            <person name="Holden M.T.G."/>
            <person name="Crossman L."/>
            <person name="Challis G.L."/>
            <person name="Churcher C."/>
            <person name="Mungall K."/>
            <person name="Brooks K."/>
            <person name="Chillingworth T."/>
            <person name="Feltwell T."/>
            <person name="Abdellah Z."/>
            <person name="Hauser H."/>
            <person name="Jagels K."/>
            <person name="Maddison M."/>
            <person name="Moule S."/>
            <person name="Sanders M."/>
            <person name="Whitehead S."/>
            <person name="Quail M.A."/>
            <person name="Dougan G."/>
            <person name="Parkhill J."/>
            <person name="Prentice M.B."/>
        </authorList>
    </citation>
    <scope>NUCLEOTIDE SEQUENCE [LARGE SCALE GENOMIC DNA]</scope>
    <source>
        <strain>NCTC 13174 / 8081</strain>
    </source>
</reference>
<gene>
    <name evidence="1" type="primary">mntP</name>
    <name type="ordered locus">YE1772</name>
</gene>
<evidence type="ECO:0000255" key="1">
    <source>
        <dbReference type="HAMAP-Rule" id="MF_01521"/>
    </source>
</evidence>
<name>MNTP_YERE8</name>
<sequence>MNLSATLVLAFAMSMDAFAASIGKGASLHKPRFREAIRTGLIFGVIEAITPLIGWCIGLFASQYILEWDHWIAFSLLFILGCRMIFEGAKQQVEETEKMRSHSFWVLVMTAIATSLDAMAIGVGLAFLQVNIVHTAMAIGLATMIMATLGMLIGRYIGPLLGKRAEIIGGIVLIGIGFNILYEHIYRLA</sequence>
<keyword id="KW-0997">Cell inner membrane</keyword>
<keyword id="KW-1003">Cell membrane</keyword>
<keyword id="KW-0406">Ion transport</keyword>
<keyword id="KW-0464">Manganese</keyword>
<keyword id="KW-0472">Membrane</keyword>
<keyword id="KW-0812">Transmembrane</keyword>
<keyword id="KW-1133">Transmembrane helix</keyword>
<keyword id="KW-0813">Transport</keyword>